<comment type="function">
    <text evidence="8">Important transcriptional activator regulating the expression of genes involved in immune and inflammatory responses. Binds to regulatory regions of several acute-phase and cytokines genes and probably plays a role in the regulation of acute-phase reaction, inflammation and hemopoiesis. The consensus recognition site is 5'-T[TG]NNGNAA[TG]-3'. Functions in brown adipose tissue (BAT) differentiation. Regulates the transcriptional induction of peroxisome proliferator-activated receptor gamma (PPARG). Binds to the MGF and MIM-1 promoters and activates the transcription of these genes.</text>
</comment>
<comment type="function">
    <text evidence="1 2 3 8">Important transcription factor regulating the expression of genes involved in immune and inflammatory responses (PubMed:8467792). Also plays a significant role in adipogenesis, as well as in the gluconeogenic pathway, liver regeneration, and hematopoiesis. The consensus recognition site is 5'-T[TG]NNGNAA[TG]-3'. Its functional capacity is governed by protein interactions and post-translational protein modifications.</text>
</comment>
<comment type="subunit">
    <text evidence="7">Binds DNA as a dimer. Interacts (not methylated) with MED23, MED26, SMARCA2, SMARCB1 and SMARCC1 (PubMed:20111005).</text>
</comment>
<comment type="interaction">
    <interactant intactId="EBI-7774198">
        <id>Q05826</id>
    </interactant>
    <interactant intactId="EBI-2339854">
        <id>Q86X55</id>
        <label>CARM1</label>
    </interactant>
    <organismsDiffer>true</organismsDiffer>
    <experiments>3</experiments>
</comment>
<comment type="subcellular location">
    <subcellularLocation>
        <location evidence="9">Nucleus</location>
    </subcellularLocation>
</comment>
<comment type="tissue specificity">
    <text>Specifically expressed in myelomoncytic cells.</text>
</comment>
<comment type="PTM">
    <text evidence="1 6 7">Methylated. Methylation at Arg-3 by CARM1 and at Lys-39 by EHMT2, inhibit transactivation activity. Methylation is probably inhibited by phosphorylation at Thr-220.</text>
</comment>
<comment type="similarity">
    <text evidence="9">Belongs to the bZIP family. C/EBP subfamily.</text>
</comment>
<organism>
    <name type="scientific">Gallus gallus</name>
    <name type="common">Chicken</name>
    <dbReference type="NCBI Taxonomy" id="9031"/>
    <lineage>
        <taxon>Eukaryota</taxon>
        <taxon>Metazoa</taxon>
        <taxon>Chordata</taxon>
        <taxon>Craniata</taxon>
        <taxon>Vertebrata</taxon>
        <taxon>Euteleostomi</taxon>
        <taxon>Archelosauria</taxon>
        <taxon>Archosauria</taxon>
        <taxon>Dinosauria</taxon>
        <taxon>Saurischia</taxon>
        <taxon>Theropoda</taxon>
        <taxon>Coelurosauria</taxon>
        <taxon>Aves</taxon>
        <taxon>Neognathae</taxon>
        <taxon>Galloanserae</taxon>
        <taxon>Galliformes</taxon>
        <taxon>Phasianidae</taxon>
        <taxon>Phasianinae</taxon>
        <taxon>Gallus</taxon>
    </lineage>
</organism>
<gene>
    <name type="primary">CEBPB</name>
</gene>
<proteinExistence type="evidence at protein level"/>
<feature type="chain" id="PRO_0000076620" description="CCAAT/enhancer-binding protein beta">
    <location>
        <begin position="1"/>
        <end position="328"/>
    </location>
</feature>
<feature type="domain" description="bZIP" evidence="4">
    <location>
        <begin position="254"/>
        <end position="317"/>
    </location>
</feature>
<feature type="region of interest" description="Disordered" evidence="5">
    <location>
        <begin position="165"/>
        <end position="274"/>
    </location>
</feature>
<feature type="region of interest" description="Basic motif" evidence="4">
    <location>
        <begin position="258"/>
        <end position="278"/>
    </location>
</feature>
<feature type="region of interest" description="Leucine-zipper" evidence="4">
    <location>
        <begin position="280"/>
        <end position="287"/>
    </location>
</feature>
<feature type="compositionally biased region" description="Low complexity" evidence="5">
    <location>
        <begin position="200"/>
        <end position="231"/>
    </location>
</feature>
<feature type="compositionally biased region" description="Basic and acidic residues" evidence="5">
    <location>
        <begin position="248"/>
        <end position="264"/>
    </location>
</feature>
<feature type="modified residue" description="Asymmetric dimethylarginine; by CARM1" evidence="7">
    <location>
        <position position="3"/>
    </location>
</feature>
<feature type="modified residue" description="N6-methylated lysine" evidence="10">
    <location>
        <position position="39"/>
    </location>
</feature>
<feature type="modified residue" description="Phosphothreonine; by RPS6KA1, CDK2 and MAPK" evidence="10">
    <location>
        <position position="220"/>
    </location>
</feature>
<feature type="mutagenesis site" description="Not methylated. Increases interaction with SMARCA2 and MED23." evidence="7">
    <original>R</original>
    <variation>A</variation>
    <location>
        <position position="3"/>
    </location>
</feature>
<feature type="mutagenesis site" description="Decreases interaction with SMARCA2 and MED23." evidence="7">
    <original>R</original>
    <variation>L</variation>
    <location>
        <position position="3"/>
    </location>
</feature>
<feature type="mutagenesis site" description="Decreases methylation. Increases transactivation activity inhibition." evidence="6">
    <original>K</original>
    <variation>A</variation>
    <location>
        <position position="39"/>
    </location>
</feature>
<feature type="mutagenesis site" description="Decreases methylation by CARM1 and increases transactivation activity." evidence="7">
    <original>T</original>
    <variation>D</variation>
    <location>
        <position position="220"/>
    </location>
</feature>
<reference key="1">
    <citation type="journal article" date="1993" name="EMBO J.">
        <title>The NF-M transcription factor is related to C/EBP beta and plays a role in signal transduction, differentiation and leukemogenesis of avian myelomonocytic cells.</title>
        <authorList>
            <person name="Katz S."/>
            <person name="Kowenz-Leutz E."/>
            <person name="Mueller C."/>
            <person name="Meese K."/>
            <person name="Ness S.A."/>
            <person name="Leutz A."/>
        </authorList>
    </citation>
    <scope>NUCLEOTIDE SEQUENCE [MRNA]</scope>
    <scope>FUNCTION</scope>
</reference>
<reference key="2">
    <citation type="journal article" date="1993" name="EMBO J.">
        <title>Synergistic activation of the chicken mim-1 gene by v-myb and C/EBP transcription factors.</title>
        <authorList>
            <person name="Burk O."/>
            <person name="Mink S."/>
            <person name="Ringwald M."/>
            <person name="Klempnauer K.H."/>
        </authorList>
    </citation>
    <scope>NUCLEOTIDE SEQUENCE [MRNA]</scope>
</reference>
<reference key="3">
    <citation type="submission" date="2003-01" db="EMBL/GenBank/DDBJ databases">
        <title>Analysis of DNase I-hypersensitive sites in the chromatin of the chicken C/EBPbeta gene reveals multiple cell-type specific cis-regulatory elements.</title>
        <authorList>
            <person name="Kintscher J.R."/>
            <person name="Miethe J."/>
            <person name="Klempnauer K.-H."/>
        </authorList>
    </citation>
    <scope>NUCLEOTIDE SEQUENCE [GENOMIC DNA]</scope>
</reference>
<reference key="4">
    <citation type="journal article" date="2008" name="J. Biol. Chem.">
        <title>G9a-mediated lysine methylation alters the function of CCAAT/enhancer-binding protein-beta.</title>
        <authorList>
            <person name="Pless O."/>
            <person name="Kowenz-Leutz E."/>
            <person name="Knoblich M."/>
            <person name="Lausen J."/>
            <person name="Beyermann M."/>
            <person name="Walsh M.J."/>
            <person name="Leutz A."/>
        </authorList>
    </citation>
    <scope>FUNCTION</scope>
    <scope>METHYLATION AT LYS-39</scope>
    <scope>MUTAGENESIS OF LYS-39</scope>
</reference>
<reference key="5">
    <citation type="journal article" date="2010" name="EMBO J.">
        <title>Crosstalk between C/EBPbeta phosphorylation, arginine methylation, and SWI/SNF/Mediator implies an indexing transcription factor code.</title>
        <authorList>
            <person name="Kowenz-Leutz E."/>
            <person name="Pless O."/>
            <person name="Dittmar G."/>
            <person name="Knoblich M."/>
            <person name="Leutz A."/>
        </authorList>
    </citation>
    <scope>METHYLATION AT ARG-3</scope>
    <scope>MUTAGENESIS OF ARG-3 AND THR-220</scope>
    <scope>INTERACTION WITH MED23 AND SMARCA2</scope>
    <scope>PHOSPHORYLATION AT THR-220</scope>
</reference>
<evidence type="ECO:0000250" key="1">
    <source>
        <dbReference type="UniProtKB" id="P17676"/>
    </source>
</evidence>
<evidence type="ECO:0000250" key="2">
    <source>
        <dbReference type="UniProtKB" id="P21272"/>
    </source>
</evidence>
<evidence type="ECO:0000250" key="3">
    <source>
        <dbReference type="UniProtKB" id="P28033"/>
    </source>
</evidence>
<evidence type="ECO:0000255" key="4">
    <source>
        <dbReference type="PROSITE-ProRule" id="PRU00978"/>
    </source>
</evidence>
<evidence type="ECO:0000256" key="5">
    <source>
        <dbReference type="SAM" id="MobiDB-lite"/>
    </source>
</evidence>
<evidence type="ECO:0000269" key="6">
    <source>
    </source>
</evidence>
<evidence type="ECO:0000269" key="7">
    <source>
    </source>
</evidence>
<evidence type="ECO:0000269" key="8">
    <source>
    </source>
</evidence>
<evidence type="ECO:0000305" key="9"/>
<evidence type="ECO:0000305" key="10">
    <source>
    </source>
</evidence>
<sequence length="328" mass="35030">MQRLVAWDAACLPIQPPAFKSMEVANFYYEADCLAALNKLHPRAAGGRSMTELTVGDHERAIDFSPYLDPLAASQQPAQPPPPAAAAGGNFEPACSSGGQDFLSDLFAEDYKGSGGGKKPDYTYISLTRHGHPCGSQSHKPGVLPGCFPPQIVETKVEPVFETLDSCKGPRKEEGGAGPGPGGMSSPYGSTVRSYLGYQSVPSGSSGNLSTSSSSSPPGTPNPSESSKSAAGAGGYSGPPAGKNKPKKCVDKHSDEYKLRRERNNIAVRKSRDKAKMRNLETQHKVLELTAENERLQKKVEQLSRELSTLRNLFKQLPEPLLASSPRC</sequence>
<accession>Q05826</accession>
<accession>Q540C6</accession>
<keyword id="KW-0010">Activator</keyword>
<keyword id="KW-0238">DNA-binding</keyword>
<keyword id="KW-0488">Methylation</keyword>
<keyword id="KW-0539">Nucleus</keyword>
<keyword id="KW-0597">Phosphoprotein</keyword>
<keyword id="KW-1185">Reference proteome</keyword>
<keyword id="KW-0804">Transcription</keyword>
<keyword id="KW-0805">Transcription regulation</keyword>
<name>CEBPB_CHICK</name>
<protein>
    <recommendedName>
        <fullName>CCAAT/enhancer-binding protein beta</fullName>
        <shortName>C/EBP beta</shortName>
    </recommendedName>
    <alternativeName>
        <fullName>Transcription factor NF-M</fullName>
        <shortName>CCR protein</shortName>
    </alternativeName>
</protein>
<dbReference type="EMBL" id="Z21646">
    <property type="protein sequence ID" value="CAA79760.1"/>
    <property type="molecule type" value="mRNA"/>
</dbReference>
<dbReference type="EMBL" id="X70813">
    <property type="protein sequence ID" value="CAA50144.1"/>
    <property type="molecule type" value="mRNA"/>
</dbReference>
<dbReference type="EMBL" id="AY212285">
    <property type="protein sequence ID" value="AAO39751.1"/>
    <property type="molecule type" value="Genomic_DNA"/>
</dbReference>
<dbReference type="PIR" id="S35336">
    <property type="entry name" value="S35336"/>
</dbReference>
<dbReference type="RefSeq" id="NP_990584.1">
    <property type="nucleotide sequence ID" value="NM_205253.3"/>
</dbReference>
<dbReference type="SMR" id="Q05826"/>
<dbReference type="FunCoup" id="Q05826">
    <property type="interactions" value="53"/>
</dbReference>
<dbReference type="IntAct" id="Q05826">
    <property type="interactions" value="2"/>
</dbReference>
<dbReference type="MINT" id="Q05826"/>
<dbReference type="STRING" id="9031.ENSGALP00000012991"/>
<dbReference type="iPTMnet" id="Q05826"/>
<dbReference type="PaxDb" id="9031-ENSGALP00000012991"/>
<dbReference type="Ensembl" id="ENSGALT00010034971.1">
    <property type="protein sequence ID" value="ENSGALP00010020443.1"/>
    <property type="gene ID" value="ENSGALG00010014573.1"/>
</dbReference>
<dbReference type="Ensembl" id="ENSGALT00010034981.1">
    <property type="protein sequence ID" value="ENSGALP00010020447.1"/>
    <property type="gene ID" value="ENSGALG00010014573.1"/>
</dbReference>
<dbReference type="Ensembl" id="ENSGALT00010034989.1">
    <property type="protein sequence ID" value="ENSGALP00010020450.1"/>
    <property type="gene ID" value="ENSGALG00010014573.1"/>
</dbReference>
<dbReference type="Ensembl" id="ENSGALT00010034993.1">
    <property type="protein sequence ID" value="ENSGALP00010020452.1"/>
    <property type="gene ID" value="ENSGALG00010014573.1"/>
</dbReference>
<dbReference type="Ensembl" id="ENSGALT00010034998.1">
    <property type="protein sequence ID" value="ENSGALP00010020453.1"/>
    <property type="gene ID" value="ENSGALG00010014573.1"/>
</dbReference>
<dbReference type="GeneID" id="396185"/>
<dbReference type="KEGG" id="gga:396185"/>
<dbReference type="CTD" id="1051"/>
<dbReference type="VEuPathDB" id="HostDB:geneid_396185"/>
<dbReference type="eggNOG" id="KOG3119">
    <property type="taxonomic scope" value="Eukaryota"/>
</dbReference>
<dbReference type="GeneTree" id="ENSGT00940000162137"/>
<dbReference type="HOGENOM" id="CLU_043327_1_0_1"/>
<dbReference type="InParanoid" id="Q05826"/>
<dbReference type="OMA" id="RLVAWDQ"/>
<dbReference type="OrthoDB" id="10032067at2759"/>
<dbReference type="PhylomeDB" id="Q05826"/>
<dbReference type="TreeFam" id="TF105008"/>
<dbReference type="Reactome" id="R-GGA-2559582">
    <property type="pathway name" value="Senescence-Associated Secretory Phenotype (SASP)"/>
</dbReference>
<dbReference type="PRO" id="PR:Q05826"/>
<dbReference type="Proteomes" id="UP000000539">
    <property type="component" value="Chromosome 20"/>
</dbReference>
<dbReference type="Bgee" id="ENSGALG00000008014">
    <property type="expression patterns" value="Expressed in granulocyte and 12 other cell types or tissues"/>
</dbReference>
<dbReference type="GO" id="GO:1990647">
    <property type="term" value="C:C/EBP complex"/>
    <property type="evidence" value="ECO:0007669"/>
    <property type="project" value="Ensembl"/>
</dbReference>
<dbReference type="GO" id="GO:0036488">
    <property type="term" value="C:CHOP-C/EBP complex"/>
    <property type="evidence" value="ECO:0007669"/>
    <property type="project" value="Ensembl"/>
</dbReference>
<dbReference type="GO" id="GO:0000785">
    <property type="term" value="C:chromatin"/>
    <property type="evidence" value="ECO:0007669"/>
    <property type="project" value="Ensembl"/>
</dbReference>
<dbReference type="GO" id="GO:0000779">
    <property type="term" value="C:condensed chromosome, centromeric region"/>
    <property type="evidence" value="ECO:0007669"/>
    <property type="project" value="Ensembl"/>
</dbReference>
<dbReference type="GO" id="GO:0005737">
    <property type="term" value="C:cytoplasm"/>
    <property type="evidence" value="ECO:0007669"/>
    <property type="project" value="Ensembl"/>
</dbReference>
<dbReference type="GO" id="GO:0016363">
    <property type="term" value="C:nuclear matrix"/>
    <property type="evidence" value="ECO:0007669"/>
    <property type="project" value="Ensembl"/>
</dbReference>
<dbReference type="GO" id="GO:0005654">
    <property type="term" value="C:nucleoplasm"/>
    <property type="evidence" value="ECO:0007669"/>
    <property type="project" value="Ensembl"/>
</dbReference>
<dbReference type="GO" id="GO:0005634">
    <property type="term" value="C:nucleus"/>
    <property type="evidence" value="ECO:0000314"/>
    <property type="project" value="AgBase"/>
</dbReference>
<dbReference type="GO" id="GO:0031490">
    <property type="term" value="F:chromatin DNA binding"/>
    <property type="evidence" value="ECO:0007669"/>
    <property type="project" value="Ensembl"/>
</dbReference>
<dbReference type="GO" id="GO:0000987">
    <property type="term" value="F:cis-regulatory region sequence-specific DNA binding"/>
    <property type="evidence" value="ECO:0000314"/>
    <property type="project" value="AgBase"/>
</dbReference>
<dbReference type="GO" id="GO:0001228">
    <property type="term" value="F:DNA-binding transcription activator activity, RNA polymerase II-specific"/>
    <property type="evidence" value="ECO:0000314"/>
    <property type="project" value="AgBase"/>
</dbReference>
<dbReference type="GO" id="GO:0000981">
    <property type="term" value="F:DNA-binding transcription factor activity, RNA polymerase II-specific"/>
    <property type="evidence" value="ECO:0000250"/>
    <property type="project" value="UniProtKB"/>
</dbReference>
<dbReference type="GO" id="GO:0035035">
    <property type="term" value="F:histone acetyltransferase binding"/>
    <property type="evidence" value="ECO:0007669"/>
    <property type="project" value="Ensembl"/>
</dbReference>
<dbReference type="GO" id="GO:0042826">
    <property type="term" value="F:histone deacetylase binding"/>
    <property type="evidence" value="ECO:0007669"/>
    <property type="project" value="Ensembl"/>
</dbReference>
<dbReference type="GO" id="GO:0042802">
    <property type="term" value="F:identical protein binding"/>
    <property type="evidence" value="ECO:0007669"/>
    <property type="project" value="Ensembl"/>
</dbReference>
<dbReference type="GO" id="GO:0019900">
    <property type="term" value="F:kinase binding"/>
    <property type="evidence" value="ECO:0007669"/>
    <property type="project" value="Ensembl"/>
</dbReference>
<dbReference type="GO" id="GO:0000978">
    <property type="term" value="F:RNA polymerase II cis-regulatory region sequence-specific DNA binding"/>
    <property type="evidence" value="ECO:0000318"/>
    <property type="project" value="GO_Central"/>
</dbReference>
<dbReference type="GO" id="GO:0000979">
    <property type="term" value="F:RNA polymerase II core promoter sequence-specific DNA binding"/>
    <property type="evidence" value="ECO:0007669"/>
    <property type="project" value="Ensembl"/>
</dbReference>
<dbReference type="GO" id="GO:0044389">
    <property type="term" value="F:ubiquitin-like protein ligase binding"/>
    <property type="evidence" value="ECO:0007669"/>
    <property type="project" value="Ensembl"/>
</dbReference>
<dbReference type="GO" id="GO:0071230">
    <property type="term" value="P:cellular response to amino acid stimulus"/>
    <property type="evidence" value="ECO:0007669"/>
    <property type="project" value="Ensembl"/>
</dbReference>
<dbReference type="GO" id="GO:0042742">
    <property type="term" value="P:defense response to bacterium"/>
    <property type="evidence" value="ECO:0007669"/>
    <property type="project" value="Ensembl"/>
</dbReference>
<dbReference type="GO" id="GO:0045444">
    <property type="term" value="P:fat cell differentiation"/>
    <property type="evidence" value="ECO:0007669"/>
    <property type="project" value="Ensembl"/>
</dbReference>
<dbReference type="GO" id="GO:0072574">
    <property type="term" value="P:hepatocyte proliferation"/>
    <property type="evidence" value="ECO:0007669"/>
    <property type="project" value="Ensembl"/>
</dbReference>
<dbReference type="GO" id="GO:0070059">
    <property type="term" value="P:intrinsic apoptotic signaling pathway in response to endoplasmic reticulum stress"/>
    <property type="evidence" value="ECO:0007669"/>
    <property type="project" value="Ensembl"/>
</dbReference>
<dbReference type="GO" id="GO:0097421">
    <property type="term" value="P:liver regeneration"/>
    <property type="evidence" value="ECO:0007669"/>
    <property type="project" value="Ensembl"/>
</dbReference>
<dbReference type="GO" id="GO:0045892">
    <property type="term" value="P:negative regulation of DNA-templated transcription"/>
    <property type="evidence" value="ECO:0007669"/>
    <property type="project" value="Ensembl"/>
</dbReference>
<dbReference type="GO" id="GO:0043524">
    <property type="term" value="P:negative regulation of neuron apoptotic process"/>
    <property type="evidence" value="ECO:0007669"/>
    <property type="project" value="Ensembl"/>
</dbReference>
<dbReference type="GO" id="GO:0042130">
    <property type="term" value="P:negative regulation of T cell proliferation"/>
    <property type="evidence" value="ECO:0007669"/>
    <property type="project" value="Ensembl"/>
</dbReference>
<dbReference type="GO" id="GO:0030182">
    <property type="term" value="P:neuron differentiation"/>
    <property type="evidence" value="ECO:0007669"/>
    <property type="project" value="Ensembl"/>
</dbReference>
<dbReference type="GO" id="GO:0001541">
    <property type="term" value="P:ovarian follicle development"/>
    <property type="evidence" value="ECO:0007669"/>
    <property type="project" value="Ensembl"/>
</dbReference>
<dbReference type="GO" id="GO:0070169">
    <property type="term" value="P:positive regulation of biomineral tissue development"/>
    <property type="evidence" value="ECO:0007669"/>
    <property type="project" value="Ensembl"/>
</dbReference>
<dbReference type="GO" id="GO:0120162">
    <property type="term" value="P:positive regulation of cold-induced thermogenesis"/>
    <property type="evidence" value="ECO:0007669"/>
    <property type="project" value="Ensembl"/>
</dbReference>
<dbReference type="GO" id="GO:2000144">
    <property type="term" value="P:positive regulation of DNA-templated transcription initiation"/>
    <property type="evidence" value="ECO:0000314"/>
    <property type="project" value="AgBase"/>
</dbReference>
<dbReference type="GO" id="GO:0045600">
    <property type="term" value="P:positive regulation of fat cell differentiation"/>
    <property type="evidence" value="ECO:0007669"/>
    <property type="project" value="Ensembl"/>
</dbReference>
<dbReference type="GO" id="GO:0050729">
    <property type="term" value="P:positive regulation of inflammatory response"/>
    <property type="evidence" value="ECO:0007669"/>
    <property type="project" value="Ensembl"/>
</dbReference>
<dbReference type="GO" id="GO:0032753">
    <property type="term" value="P:positive regulation of interleukin-4 production"/>
    <property type="evidence" value="ECO:0007669"/>
    <property type="project" value="Ensembl"/>
</dbReference>
<dbReference type="GO" id="GO:0045669">
    <property type="term" value="P:positive regulation of osteoblast differentiation"/>
    <property type="evidence" value="ECO:0007669"/>
    <property type="project" value="Ensembl"/>
</dbReference>
<dbReference type="GO" id="GO:2000120">
    <property type="term" value="P:positive regulation of sodium-dependent phosphate transport"/>
    <property type="evidence" value="ECO:0007669"/>
    <property type="project" value="Ensembl"/>
</dbReference>
<dbReference type="GO" id="GO:0045944">
    <property type="term" value="P:positive regulation of transcription by RNA polymerase II"/>
    <property type="evidence" value="ECO:0000314"/>
    <property type="project" value="AgBase"/>
</dbReference>
<dbReference type="GO" id="GO:0045595">
    <property type="term" value="P:regulation of cell differentiation"/>
    <property type="evidence" value="ECO:0000318"/>
    <property type="project" value="GO_Central"/>
</dbReference>
<dbReference type="GO" id="GO:2001198">
    <property type="term" value="P:regulation of dendritic cell differentiation"/>
    <property type="evidence" value="ECO:0007669"/>
    <property type="project" value="Ensembl"/>
</dbReference>
<dbReference type="GO" id="GO:0032675">
    <property type="term" value="P:regulation of interleukin-6 production"/>
    <property type="evidence" value="ECO:0007669"/>
    <property type="project" value="Ensembl"/>
</dbReference>
<dbReference type="GO" id="GO:0045670">
    <property type="term" value="P:regulation of osteoclast differentiation"/>
    <property type="evidence" value="ECO:0007669"/>
    <property type="project" value="Ensembl"/>
</dbReference>
<dbReference type="GO" id="GO:0006357">
    <property type="term" value="P:regulation of transcription by RNA polymerase II"/>
    <property type="evidence" value="ECO:0000318"/>
    <property type="project" value="GO_Central"/>
</dbReference>
<dbReference type="GO" id="GO:0032496">
    <property type="term" value="P:response to lipopolysaccharide"/>
    <property type="evidence" value="ECO:0007669"/>
    <property type="project" value="Ensembl"/>
</dbReference>
<dbReference type="GO" id="GO:0006366">
    <property type="term" value="P:transcription by RNA polymerase II"/>
    <property type="evidence" value="ECO:0007669"/>
    <property type="project" value="Ensembl"/>
</dbReference>
<dbReference type="CDD" id="cd14712">
    <property type="entry name" value="bZIP_CEBPB"/>
    <property type="match status" value="1"/>
</dbReference>
<dbReference type="FunFam" id="1.20.5.170:FF:000028">
    <property type="entry name" value="CCAAT/enhancer-binding protein beta"/>
    <property type="match status" value="1"/>
</dbReference>
<dbReference type="Gene3D" id="1.20.5.170">
    <property type="match status" value="1"/>
</dbReference>
<dbReference type="InterPro" id="IPR004827">
    <property type="entry name" value="bZIP"/>
</dbReference>
<dbReference type="InterPro" id="IPR046347">
    <property type="entry name" value="bZIP_sf"/>
</dbReference>
<dbReference type="InterPro" id="IPR031106">
    <property type="entry name" value="C/EBP"/>
</dbReference>
<dbReference type="InterPro" id="IPR016468">
    <property type="entry name" value="C/EBP_chordates"/>
</dbReference>
<dbReference type="PANTHER" id="PTHR23334">
    <property type="entry name" value="CCAAT/ENHANCER BINDING PROTEIN"/>
    <property type="match status" value="1"/>
</dbReference>
<dbReference type="PANTHER" id="PTHR23334:SF21">
    <property type="entry name" value="CCAAT_ENHANCER-BINDING PROTEIN BETA"/>
    <property type="match status" value="1"/>
</dbReference>
<dbReference type="Pfam" id="PF07716">
    <property type="entry name" value="bZIP_2"/>
    <property type="match status" value="1"/>
</dbReference>
<dbReference type="PIRSF" id="PIRSF005879">
    <property type="entry name" value="CCAAT/enhancer-binding"/>
    <property type="match status" value="1"/>
</dbReference>
<dbReference type="SMART" id="SM00338">
    <property type="entry name" value="BRLZ"/>
    <property type="match status" value="1"/>
</dbReference>
<dbReference type="SUPFAM" id="SSF57959">
    <property type="entry name" value="Leucine zipper domain"/>
    <property type="match status" value="1"/>
</dbReference>
<dbReference type="PROSITE" id="PS50217">
    <property type="entry name" value="BZIP"/>
    <property type="match status" value="1"/>
</dbReference>